<evidence type="ECO:0000255" key="1">
    <source>
        <dbReference type="HAMAP-Rule" id="MF_00146"/>
    </source>
</evidence>
<name>DCD_PSEA6</name>
<sequence length="199" mass="21744">MRLCDKDILTHLQEGKISITPEPDYAEISGVTVDIRLGNKFRVFTEHQAPYIDLSGPKAQVQEALNTVMSDEISVGQDKSFYLHPGELALAVTLESVTLPGNIVGWLDGRSSLARLGLMVHVTAHRIDPGWSGNIVLEFFNSGKLPLALKPGMKIGALSFEVMSDFAEKPYNARVDAKYKNQEGAIASRISGDDKTSTQ</sequence>
<protein>
    <recommendedName>
        <fullName evidence="1">dCTP deaminase</fullName>
        <ecNumber evidence="1">3.5.4.13</ecNumber>
    </recommendedName>
    <alternativeName>
        <fullName evidence="1">Deoxycytidine triphosphate deaminase</fullName>
    </alternativeName>
</protein>
<reference key="1">
    <citation type="submission" date="2006-06" db="EMBL/GenBank/DDBJ databases">
        <title>Complete sequence of Pseudoalteromonas atlantica T6c.</title>
        <authorList>
            <consortium name="US DOE Joint Genome Institute"/>
            <person name="Copeland A."/>
            <person name="Lucas S."/>
            <person name="Lapidus A."/>
            <person name="Barry K."/>
            <person name="Detter J.C."/>
            <person name="Glavina del Rio T."/>
            <person name="Hammon N."/>
            <person name="Israni S."/>
            <person name="Dalin E."/>
            <person name="Tice H."/>
            <person name="Pitluck S."/>
            <person name="Saunders E."/>
            <person name="Brettin T."/>
            <person name="Bruce D."/>
            <person name="Han C."/>
            <person name="Tapia R."/>
            <person name="Gilna P."/>
            <person name="Schmutz J."/>
            <person name="Larimer F."/>
            <person name="Land M."/>
            <person name="Hauser L."/>
            <person name="Kyrpides N."/>
            <person name="Kim E."/>
            <person name="Karls A.C."/>
            <person name="Bartlett D."/>
            <person name="Higgins B.P."/>
            <person name="Richardson P."/>
        </authorList>
    </citation>
    <scope>NUCLEOTIDE SEQUENCE [LARGE SCALE GENOMIC DNA]</scope>
    <source>
        <strain>T6c / ATCC BAA-1087</strain>
    </source>
</reference>
<keyword id="KW-0378">Hydrolase</keyword>
<keyword id="KW-0546">Nucleotide metabolism</keyword>
<keyword id="KW-0547">Nucleotide-binding</keyword>
<dbReference type="EC" id="3.5.4.13" evidence="1"/>
<dbReference type="EMBL" id="CP000388">
    <property type="protein sequence ID" value="ABG40419.1"/>
    <property type="molecule type" value="Genomic_DNA"/>
</dbReference>
<dbReference type="RefSeq" id="WP_011574715.1">
    <property type="nucleotide sequence ID" value="NC_008228.1"/>
</dbReference>
<dbReference type="SMR" id="Q15UL9"/>
<dbReference type="STRING" id="342610.Patl_1899"/>
<dbReference type="KEGG" id="pat:Patl_1899"/>
<dbReference type="eggNOG" id="COG0717">
    <property type="taxonomic scope" value="Bacteria"/>
</dbReference>
<dbReference type="HOGENOM" id="CLU_087476_2_0_6"/>
<dbReference type="OrthoDB" id="9780956at2"/>
<dbReference type="UniPathway" id="UPA00610">
    <property type="reaction ID" value="UER00665"/>
</dbReference>
<dbReference type="Proteomes" id="UP000001981">
    <property type="component" value="Chromosome"/>
</dbReference>
<dbReference type="GO" id="GO:0008829">
    <property type="term" value="F:dCTP deaminase activity"/>
    <property type="evidence" value="ECO:0007669"/>
    <property type="project" value="UniProtKB-UniRule"/>
</dbReference>
<dbReference type="GO" id="GO:0000166">
    <property type="term" value="F:nucleotide binding"/>
    <property type="evidence" value="ECO:0007669"/>
    <property type="project" value="UniProtKB-KW"/>
</dbReference>
<dbReference type="GO" id="GO:0006226">
    <property type="term" value="P:dUMP biosynthetic process"/>
    <property type="evidence" value="ECO:0007669"/>
    <property type="project" value="UniProtKB-UniPathway"/>
</dbReference>
<dbReference type="GO" id="GO:0006229">
    <property type="term" value="P:dUTP biosynthetic process"/>
    <property type="evidence" value="ECO:0007669"/>
    <property type="project" value="UniProtKB-UniRule"/>
</dbReference>
<dbReference type="GO" id="GO:0015949">
    <property type="term" value="P:nucleobase-containing small molecule interconversion"/>
    <property type="evidence" value="ECO:0007669"/>
    <property type="project" value="TreeGrafter"/>
</dbReference>
<dbReference type="CDD" id="cd07557">
    <property type="entry name" value="trimeric_dUTPase"/>
    <property type="match status" value="1"/>
</dbReference>
<dbReference type="FunFam" id="2.70.40.10:FF:000003">
    <property type="entry name" value="dCTP deaminase"/>
    <property type="match status" value="1"/>
</dbReference>
<dbReference type="Gene3D" id="2.70.40.10">
    <property type="match status" value="1"/>
</dbReference>
<dbReference type="HAMAP" id="MF_00146">
    <property type="entry name" value="dCTP_deaminase"/>
    <property type="match status" value="1"/>
</dbReference>
<dbReference type="InterPro" id="IPR011962">
    <property type="entry name" value="dCTP_deaminase"/>
</dbReference>
<dbReference type="InterPro" id="IPR036157">
    <property type="entry name" value="dUTPase-like_sf"/>
</dbReference>
<dbReference type="InterPro" id="IPR033704">
    <property type="entry name" value="dUTPase_trimeric"/>
</dbReference>
<dbReference type="NCBIfam" id="TIGR02274">
    <property type="entry name" value="dCTP_deam"/>
    <property type="match status" value="1"/>
</dbReference>
<dbReference type="PANTHER" id="PTHR42680">
    <property type="entry name" value="DCTP DEAMINASE"/>
    <property type="match status" value="1"/>
</dbReference>
<dbReference type="PANTHER" id="PTHR42680:SF3">
    <property type="entry name" value="DCTP DEAMINASE"/>
    <property type="match status" value="1"/>
</dbReference>
<dbReference type="Pfam" id="PF22769">
    <property type="entry name" value="DCD"/>
    <property type="match status" value="1"/>
</dbReference>
<dbReference type="SUPFAM" id="SSF51283">
    <property type="entry name" value="dUTPase-like"/>
    <property type="match status" value="1"/>
</dbReference>
<organism>
    <name type="scientific">Pseudoalteromonas atlantica (strain T6c / ATCC BAA-1087)</name>
    <dbReference type="NCBI Taxonomy" id="3042615"/>
    <lineage>
        <taxon>Bacteria</taxon>
        <taxon>Pseudomonadati</taxon>
        <taxon>Pseudomonadota</taxon>
        <taxon>Gammaproteobacteria</taxon>
        <taxon>Alteromonadales</taxon>
        <taxon>Alteromonadaceae</taxon>
        <taxon>Paraglaciecola</taxon>
    </lineage>
</organism>
<gene>
    <name evidence="1" type="primary">dcd</name>
    <name type="ordered locus">Patl_1899</name>
</gene>
<accession>Q15UL9</accession>
<proteinExistence type="inferred from homology"/>
<comment type="function">
    <text evidence="1">Catalyzes the deamination of dCTP to dUTP.</text>
</comment>
<comment type="catalytic activity">
    <reaction evidence="1">
        <text>dCTP + H2O + H(+) = dUTP + NH4(+)</text>
        <dbReference type="Rhea" id="RHEA:22680"/>
        <dbReference type="ChEBI" id="CHEBI:15377"/>
        <dbReference type="ChEBI" id="CHEBI:15378"/>
        <dbReference type="ChEBI" id="CHEBI:28938"/>
        <dbReference type="ChEBI" id="CHEBI:61481"/>
        <dbReference type="ChEBI" id="CHEBI:61555"/>
        <dbReference type="EC" id="3.5.4.13"/>
    </reaction>
</comment>
<comment type="pathway">
    <text evidence="1">Pyrimidine metabolism; dUMP biosynthesis; dUMP from dCTP (dUTP route): step 1/2.</text>
</comment>
<comment type="subunit">
    <text evidence="1">Homotrimer.</text>
</comment>
<comment type="similarity">
    <text evidence="1">Belongs to the dCTP deaminase family.</text>
</comment>
<feature type="chain" id="PRO_1000009782" description="dCTP deaminase">
    <location>
        <begin position="1"/>
        <end position="199"/>
    </location>
</feature>
<feature type="active site" description="Proton donor/acceptor" evidence="1">
    <location>
        <position position="138"/>
    </location>
</feature>
<feature type="binding site" evidence="1">
    <location>
        <begin position="110"/>
        <end position="115"/>
    </location>
    <ligand>
        <name>dCTP</name>
        <dbReference type="ChEBI" id="CHEBI:61481"/>
    </ligand>
</feature>
<feature type="binding site" evidence="1">
    <location>
        <position position="128"/>
    </location>
    <ligand>
        <name>dCTP</name>
        <dbReference type="ChEBI" id="CHEBI:61481"/>
    </ligand>
</feature>
<feature type="binding site" evidence="1">
    <location>
        <begin position="136"/>
        <end position="138"/>
    </location>
    <ligand>
        <name>dCTP</name>
        <dbReference type="ChEBI" id="CHEBI:61481"/>
    </ligand>
</feature>
<feature type="binding site" evidence="1">
    <location>
        <position position="171"/>
    </location>
    <ligand>
        <name>dCTP</name>
        <dbReference type="ChEBI" id="CHEBI:61481"/>
    </ligand>
</feature>
<feature type="binding site" evidence="1">
    <location>
        <position position="182"/>
    </location>
    <ligand>
        <name>dCTP</name>
        <dbReference type="ChEBI" id="CHEBI:61481"/>
    </ligand>
</feature>